<organism>
    <name type="scientific">Aliivibrio salmonicida (strain LFI1238)</name>
    <name type="common">Vibrio salmonicida (strain LFI1238)</name>
    <dbReference type="NCBI Taxonomy" id="316275"/>
    <lineage>
        <taxon>Bacteria</taxon>
        <taxon>Pseudomonadati</taxon>
        <taxon>Pseudomonadota</taxon>
        <taxon>Gammaproteobacteria</taxon>
        <taxon>Vibrionales</taxon>
        <taxon>Vibrionaceae</taxon>
        <taxon>Aliivibrio</taxon>
    </lineage>
</organism>
<sequence>MAKGAREKIKLVSTANTGHFYTTDKNKRNMPGKMEIKKFDPVVRQHVLYKEAKIK</sequence>
<proteinExistence type="inferred from homology"/>
<protein>
    <recommendedName>
        <fullName evidence="1">Large ribosomal subunit protein bL33</fullName>
    </recommendedName>
    <alternativeName>
        <fullName evidence="2">50S ribosomal protein L33</fullName>
    </alternativeName>
</protein>
<reference key="1">
    <citation type="journal article" date="2008" name="BMC Genomics">
        <title>The genome sequence of the fish pathogen Aliivibrio salmonicida strain LFI1238 shows extensive evidence of gene decay.</title>
        <authorList>
            <person name="Hjerde E."/>
            <person name="Lorentzen M.S."/>
            <person name="Holden M.T."/>
            <person name="Seeger K."/>
            <person name="Paulsen S."/>
            <person name="Bason N."/>
            <person name="Churcher C."/>
            <person name="Harris D."/>
            <person name="Norbertczak H."/>
            <person name="Quail M.A."/>
            <person name="Sanders S."/>
            <person name="Thurston S."/>
            <person name="Parkhill J."/>
            <person name="Willassen N.P."/>
            <person name="Thomson N.R."/>
        </authorList>
    </citation>
    <scope>NUCLEOTIDE SEQUENCE [LARGE SCALE GENOMIC DNA]</scope>
    <source>
        <strain>LFI1238</strain>
    </source>
</reference>
<dbReference type="EMBL" id="FM178379">
    <property type="protein sequence ID" value="CAQ77875.1"/>
    <property type="molecule type" value="Genomic_DNA"/>
</dbReference>
<dbReference type="RefSeq" id="WP_012549068.1">
    <property type="nucleotide sequence ID" value="NC_011312.1"/>
</dbReference>
<dbReference type="SMR" id="B6EPP1"/>
<dbReference type="GeneID" id="56275458"/>
<dbReference type="KEGG" id="vsa:VSAL_I0190"/>
<dbReference type="eggNOG" id="COG0267">
    <property type="taxonomic scope" value="Bacteria"/>
</dbReference>
<dbReference type="HOGENOM" id="CLU_190949_1_1_6"/>
<dbReference type="Proteomes" id="UP000001730">
    <property type="component" value="Chromosome 1"/>
</dbReference>
<dbReference type="GO" id="GO:0022625">
    <property type="term" value="C:cytosolic large ribosomal subunit"/>
    <property type="evidence" value="ECO:0007669"/>
    <property type="project" value="TreeGrafter"/>
</dbReference>
<dbReference type="GO" id="GO:0003735">
    <property type="term" value="F:structural constituent of ribosome"/>
    <property type="evidence" value="ECO:0007669"/>
    <property type="project" value="InterPro"/>
</dbReference>
<dbReference type="GO" id="GO:0006412">
    <property type="term" value="P:translation"/>
    <property type="evidence" value="ECO:0007669"/>
    <property type="project" value="UniProtKB-UniRule"/>
</dbReference>
<dbReference type="FunFam" id="2.20.28.120:FF:000001">
    <property type="entry name" value="50S ribosomal protein L33"/>
    <property type="match status" value="1"/>
</dbReference>
<dbReference type="Gene3D" id="2.20.28.120">
    <property type="entry name" value="Ribosomal protein L33"/>
    <property type="match status" value="1"/>
</dbReference>
<dbReference type="HAMAP" id="MF_00294">
    <property type="entry name" value="Ribosomal_bL33"/>
    <property type="match status" value="1"/>
</dbReference>
<dbReference type="InterPro" id="IPR001705">
    <property type="entry name" value="Ribosomal_bL33"/>
</dbReference>
<dbReference type="InterPro" id="IPR018264">
    <property type="entry name" value="Ribosomal_bL33_CS"/>
</dbReference>
<dbReference type="InterPro" id="IPR038584">
    <property type="entry name" value="Ribosomal_bL33_sf"/>
</dbReference>
<dbReference type="InterPro" id="IPR011332">
    <property type="entry name" value="Ribosomal_zn-bd"/>
</dbReference>
<dbReference type="NCBIfam" id="NF001860">
    <property type="entry name" value="PRK00595.1"/>
    <property type="match status" value="1"/>
</dbReference>
<dbReference type="NCBIfam" id="TIGR01023">
    <property type="entry name" value="rpmG_bact"/>
    <property type="match status" value="1"/>
</dbReference>
<dbReference type="PANTHER" id="PTHR15238">
    <property type="entry name" value="54S RIBOSOMAL PROTEIN L39, MITOCHONDRIAL"/>
    <property type="match status" value="1"/>
</dbReference>
<dbReference type="PANTHER" id="PTHR15238:SF1">
    <property type="entry name" value="LARGE RIBOSOMAL SUBUNIT PROTEIN BL33M"/>
    <property type="match status" value="1"/>
</dbReference>
<dbReference type="Pfam" id="PF00471">
    <property type="entry name" value="Ribosomal_L33"/>
    <property type="match status" value="1"/>
</dbReference>
<dbReference type="SUPFAM" id="SSF57829">
    <property type="entry name" value="Zn-binding ribosomal proteins"/>
    <property type="match status" value="1"/>
</dbReference>
<dbReference type="PROSITE" id="PS00582">
    <property type="entry name" value="RIBOSOMAL_L33"/>
    <property type="match status" value="1"/>
</dbReference>
<comment type="similarity">
    <text evidence="1">Belongs to the bacterial ribosomal protein bL33 family.</text>
</comment>
<keyword id="KW-0687">Ribonucleoprotein</keyword>
<keyword id="KW-0689">Ribosomal protein</keyword>
<name>RL33_ALISL</name>
<gene>
    <name evidence="1" type="primary">rpmG</name>
    <name type="ordered locus">VSAL_I0190</name>
</gene>
<evidence type="ECO:0000255" key="1">
    <source>
        <dbReference type="HAMAP-Rule" id="MF_00294"/>
    </source>
</evidence>
<evidence type="ECO:0000305" key="2"/>
<feature type="chain" id="PRO_1000115092" description="Large ribosomal subunit protein bL33">
    <location>
        <begin position="1"/>
        <end position="55"/>
    </location>
</feature>
<accession>B6EPP1</accession>